<evidence type="ECO:0000255" key="1">
    <source>
        <dbReference type="HAMAP-Rule" id="MF_00510"/>
    </source>
</evidence>
<feature type="chain" id="PRO_1000127238" description="Peptidase E">
    <location>
        <begin position="1"/>
        <end position="234"/>
    </location>
</feature>
<feature type="active site" description="Charge relay system" evidence="1">
    <location>
        <position position="123"/>
    </location>
</feature>
<feature type="active site" description="Charge relay system" evidence="1">
    <location>
        <position position="138"/>
    </location>
</feature>
<feature type="active site" description="Charge relay system" evidence="1">
    <location>
        <position position="160"/>
    </location>
</feature>
<comment type="function">
    <text evidence="1">Hydrolyzes dipeptides containing N-terminal aspartate residues. May play a role in allowing the cell to use peptide aspartate to spare carbon otherwise required for the synthesis of the aspartate family of amino acids.</text>
</comment>
<comment type="catalytic activity">
    <reaction evidence="1">
        <text>Dipeptidase E catalyzes the hydrolysis of dipeptides Asp-|-Xaa. It does not act on peptides with N-terminal Glu, Asn or Gln, nor does it cleave isoaspartyl peptides.</text>
        <dbReference type="EC" id="3.4.13.21"/>
    </reaction>
</comment>
<comment type="subcellular location">
    <subcellularLocation>
        <location evidence="1">Cytoplasm</location>
    </subcellularLocation>
</comment>
<comment type="similarity">
    <text evidence="1">Belongs to the peptidase S51 family.</text>
</comment>
<name>PEPE_ACTP7</name>
<gene>
    <name evidence="1" type="primary">pepE</name>
    <name type="ordered locus">APP7_0930</name>
</gene>
<sequence length="234" mass="26125">MKNMLLMSGSKYKDTAYLVHTLPWLAQFLADYKGKKVAFVPYAGVRRSFDEYETTVQNALQSLELEIVSVHRGKQHRDIIEQADVIAIGGGNTFCLLKQMYEHDLLDAIRAKVNSGTPYFGWSAGANVAGSSIMTTNDMPITYPPSFNALNLFPHQINPHFISGKMQGHNGESREERLEEFLIVNPQSLVYAMPEGTALHIQGEQATVLGAQDILCFSEKMQLDTKAVNSTFNY</sequence>
<protein>
    <recommendedName>
        <fullName evidence="1">Peptidase E</fullName>
        <ecNumber evidence="1">3.4.13.21</ecNumber>
    </recommendedName>
    <alternativeName>
        <fullName evidence="1">Alpha-aspartyl dipeptidase</fullName>
    </alternativeName>
    <alternativeName>
        <fullName evidence="1">Asp-specific dipeptidase</fullName>
    </alternativeName>
    <alternativeName>
        <fullName evidence="1">Dipeptidase E</fullName>
    </alternativeName>
</protein>
<organism>
    <name type="scientific">Actinobacillus pleuropneumoniae serotype 7 (strain AP76)</name>
    <dbReference type="NCBI Taxonomy" id="537457"/>
    <lineage>
        <taxon>Bacteria</taxon>
        <taxon>Pseudomonadati</taxon>
        <taxon>Pseudomonadota</taxon>
        <taxon>Gammaproteobacteria</taxon>
        <taxon>Pasteurellales</taxon>
        <taxon>Pasteurellaceae</taxon>
        <taxon>Actinobacillus</taxon>
    </lineage>
</organism>
<proteinExistence type="inferred from homology"/>
<keyword id="KW-0963">Cytoplasm</keyword>
<keyword id="KW-0224">Dipeptidase</keyword>
<keyword id="KW-0378">Hydrolase</keyword>
<keyword id="KW-0645">Protease</keyword>
<keyword id="KW-0720">Serine protease</keyword>
<dbReference type="EC" id="3.4.13.21" evidence="1"/>
<dbReference type="EMBL" id="CP001091">
    <property type="protein sequence ID" value="ACE61582.1"/>
    <property type="molecule type" value="Genomic_DNA"/>
</dbReference>
<dbReference type="RefSeq" id="WP_005617371.1">
    <property type="nucleotide sequence ID" value="NC_010939.1"/>
</dbReference>
<dbReference type="SMR" id="B3H1L0"/>
<dbReference type="MEROPS" id="S51.001"/>
<dbReference type="KEGG" id="apa:APP7_0930"/>
<dbReference type="HOGENOM" id="CLU_071689_0_0_6"/>
<dbReference type="Proteomes" id="UP000001226">
    <property type="component" value="Chromosome"/>
</dbReference>
<dbReference type="GO" id="GO:0005737">
    <property type="term" value="C:cytoplasm"/>
    <property type="evidence" value="ECO:0007669"/>
    <property type="project" value="UniProtKB-SubCell"/>
</dbReference>
<dbReference type="GO" id="GO:0016805">
    <property type="term" value="F:dipeptidase activity"/>
    <property type="evidence" value="ECO:0007669"/>
    <property type="project" value="UniProtKB-UniRule"/>
</dbReference>
<dbReference type="GO" id="GO:0008236">
    <property type="term" value="F:serine-type peptidase activity"/>
    <property type="evidence" value="ECO:0007669"/>
    <property type="project" value="UniProtKB-KW"/>
</dbReference>
<dbReference type="GO" id="GO:0006508">
    <property type="term" value="P:proteolysis"/>
    <property type="evidence" value="ECO:0007669"/>
    <property type="project" value="UniProtKB-UniRule"/>
</dbReference>
<dbReference type="CDD" id="cd03146">
    <property type="entry name" value="GAT1_Peptidase_E"/>
    <property type="match status" value="1"/>
</dbReference>
<dbReference type="FunFam" id="3.40.50.880:FF:000007">
    <property type="entry name" value="Peptidase E"/>
    <property type="match status" value="1"/>
</dbReference>
<dbReference type="Gene3D" id="3.40.50.880">
    <property type="match status" value="1"/>
</dbReference>
<dbReference type="HAMAP" id="MF_00510">
    <property type="entry name" value="Peptidase_E"/>
    <property type="match status" value="1"/>
</dbReference>
<dbReference type="InterPro" id="IPR029062">
    <property type="entry name" value="Class_I_gatase-like"/>
</dbReference>
<dbReference type="InterPro" id="IPR005320">
    <property type="entry name" value="Peptidase_S51"/>
</dbReference>
<dbReference type="InterPro" id="IPR023172">
    <property type="entry name" value="Peptidase_S51_dipeptidase-E"/>
</dbReference>
<dbReference type="NCBIfam" id="NF003642">
    <property type="entry name" value="PRK05282.1"/>
    <property type="match status" value="1"/>
</dbReference>
<dbReference type="PANTHER" id="PTHR20842:SF0">
    <property type="entry name" value="ALPHA-ASPARTYL DIPEPTIDASE"/>
    <property type="match status" value="1"/>
</dbReference>
<dbReference type="PANTHER" id="PTHR20842">
    <property type="entry name" value="PROTEASE S51 ALPHA-ASPARTYL DIPEPTIDASE"/>
    <property type="match status" value="1"/>
</dbReference>
<dbReference type="Pfam" id="PF03575">
    <property type="entry name" value="Peptidase_S51"/>
    <property type="match status" value="1"/>
</dbReference>
<dbReference type="SUPFAM" id="SSF52317">
    <property type="entry name" value="Class I glutamine amidotransferase-like"/>
    <property type="match status" value="1"/>
</dbReference>
<reference key="1">
    <citation type="submission" date="2008-06" db="EMBL/GenBank/DDBJ databases">
        <title>Genome and proteome analysis of A. pleuropneumoniae serotype 7.</title>
        <authorList>
            <person name="Linke B."/>
            <person name="Buettner F."/>
            <person name="Martinez-Arias R."/>
            <person name="Goesmann A."/>
            <person name="Baltes N."/>
            <person name="Tegetmeyer H."/>
            <person name="Singh M."/>
            <person name="Gerlach G.F."/>
        </authorList>
    </citation>
    <scope>NUCLEOTIDE SEQUENCE [LARGE SCALE GENOMIC DNA]</scope>
    <source>
        <strain>AP76</strain>
    </source>
</reference>
<accession>B3H1L0</accession>